<accession>Q2TBX2</accession>
<protein>
    <recommendedName>
        <fullName>Prefoldin subunit 3</fullName>
    </recommendedName>
    <alternativeName>
        <fullName>von Hippel-Lindau-binding protein 1</fullName>
        <shortName>VBP-1</shortName>
        <shortName>VHL-binding protein 1</shortName>
    </alternativeName>
</protein>
<sequence length="197" mass="22483">MAASKDGCGVGEVAAGNGRRLHLGIPEAVFVEDVDSFMKQPGNETADIVLKKLDEQYQKYKFMELNLAQKKRRLKGQIPEIKQTLEILKYKQKKKESTSSLETRFLLADNLYCKASVPPTDKVCLWLGANVMLEYDIDEAQALLEKNLLTATKNLDSLEEDLDFLRDQFTTTEVNMARVYNWDVKRRNKDDSTKNKA</sequence>
<gene>
    <name type="primary">VBP1</name>
    <name type="synonym">PFDN3</name>
</gene>
<comment type="function">
    <text evidence="1">Binds specifically to cytosolic chaperonin (c-CPN) and transfers target proteins to it. Binds to nascent polypeptide chain and promotes folding in an environment in which there are many competing pathways for nonnative proteins (By similarity).</text>
</comment>
<comment type="subunit">
    <text evidence="1">Heterohexamer of two PFD-alpha type and four PFD-beta type subunits. Binds to the C-terminal part of VHL (By similarity).</text>
</comment>
<comment type="subcellular location">
    <subcellularLocation>
        <location evidence="1">Cytoplasm</location>
    </subcellularLocation>
    <subcellularLocation>
        <location evidence="1">Nucleus</location>
    </subcellularLocation>
    <text evidence="1">In complex with VHL can translocate to the nucleus.</text>
</comment>
<comment type="similarity">
    <text evidence="3">Belongs to the prefoldin subunit alpha family.</text>
</comment>
<evidence type="ECO:0000250" key="1"/>
<evidence type="ECO:0000250" key="2">
    <source>
        <dbReference type="UniProtKB" id="P61758"/>
    </source>
</evidence>
<evidence type="ECO:0000305" key="3"/>
<proteinExistence type="evidence at transcript level"/>
<reference key="1">
    <citation type="submission" date="2005-11" db="EMBL/GenBank/DDBJ databases">
        <authorList>
            <consortium name="NIH - Mammalian Gene Collection (MGC) project"/>
        </authorList>
    </citation>
    <scope>NUCLEOTIDE SEQUENCE [LARGE SCALE MRNA]</scope>
    <source>
        <strain>Crossbred X Angus</strain>
        <tissue>Liver</tissue>
    </source>
</reference>
<name>PFD3_BOVIN</name>
<keyword id="KW-0007">Acetylation</keyword>
<keyword id="KW-0143">Chaperone</keyword>
<keyword id="KW-0963">Cytoplasm</keyword>
<keyword id="KW-0539">Nucleus</keyword>
<keyword id="KW-1185">Reference proteome</keyword>
<dbReference type="EMBL" id="BC109526">
    <property type="protein sequence ID" value="AAI09527.1"/>
    <property type="molecule type" value="mRNA"/>
</dbReference>
<dbReference type="RefSeq" id="NP_001033605.1">
    <property type="nucleotide sequence ID" value="NM_001038516.2"/>
</dbReference>
<dbReference type="SMR" id="Q2TBX2"/>
<dbReference type="FunCoup" id="Q2TBX2">
    <property type="interactions" value="3537"/>
</dbReference>
<dbReference type="STRING" id="9913.ENSBTAP00000022946"/>
<dbReference type="PaxDb" id="9913-ENSBTAP00000022946"/>
<dbReference type="GeneID" id="508727"/>
<dbReference type="KEGG" id="bta:508727"/>
<dbReference type="CTD" id="7411"/>
<dbReference type="eggNOG" id="KOG3313">
    <property type="taxonomic scope" value="Eukaryota"/>
</dbReference>
<dbReference type="InParanoid" id="Q2TBX2"/>
<dbReference type="OrthoDB" id="6375174at2759"/>
<dbReference type="Proteomes" id="UP000009136">
    <property type="component" value="Unplaced"/>
</dbReference>
<dbReference type="GO" id="GO:0005737">
    <property type="term" value="C:cytoplasm"/>
    <property type="evidence" value="ECO:0000318"/>
    <property type="project" value="GO_Central"/>
</dbReference>
<dbReference type="GO" id="GO:0005829">
    <property type="term" value="C:cytosol"/>
    <property type="evidence" value="ECO:0000304"/>
    <property type="project" value="Reactome"/>
</dbReference>
<dbReference type="GO" id="GO:0005634">
    <property type="term" value="C:nucleus"/>
    <property type="evidence" value="ECO:0007669"/>
    <property type="project" value="UniProtKB-SubCell"/>
</dbReference>
<dbReference type="GO" id="GO:0016272">
    <property type="term" value="C:prefoldin complex"/>
    <property type="evidence" value="ECO:0000318"/>
    <property type="project" value="GO_Central"/>
</dbReference>
<dbReference type="GO" id="GO:0015631">
    <property type="term" value="F:tubulin binding"/>
    <property type="evidence" value="ECO:0000318"/>
    <property type="project" value="GO_Central"/>
</dbReference>
<dbReference type="GO" id="GO:0007017">
    <property type="term" value="P:microtubule-based process"/>
    <property type="evidence" value="ECO:0000318"/>
    <property type="project" value="GO_Central"/>
</dbReference>
<dbReference type="GO" id="GO:0006457">
    <property type="term" value="P:protein folding"/>
    <property type="evidence" value="ECO:0007669"/>
    <property type="project" value="InterPro"/>
</dbReference>
<dbReference type="GO" id="GO:0007021">
    <property type="term" value="P:tubulin complex assembly"/>
    <property type="evidence" value="ECO:0000318"/>
    <property type="project" value="GO_Central"/>
</dbReference>
<dbReference type="CDD" id="cd23156">
    <property type="entry name" value="Prefoldin_3"/>
    <property type="match status" value="1"/>
</dbReference>
<dbReference type="FunFam" id="1.10.287.370:FF:000001">
    <property type="entry name" value="Prefoldin subunit 3"/>
    <property type="match status" value="1"/>
</dbReference>
<dbReference type="Gene3D" id="1.10.287.370">
    <property type="match status" value="1"/>
</dbReference>
<dbReference type="InterPro" id="IPR016655">
    <property type="entry name" value="PFD3"/>
</dbReference>
<dbReference type="InterPro" id="IPR009053">
    <property type="entry name" value="Prefoldin"/>
</dbReference>
<dbReference type="InterPro" id="IPR004127">
    <property type="entry name" value="Prefoldin_subunit_alpha"/>
</dbReference>
<dbReference type="PANTHER" id="PTHR12409">
    <property type="entry name" value="PREFOLDIN SUBUNIT 3"/>
    <property type="match status" value="1"/>
</dbReference>
<dbReference type="PANTHER" id="PTHR12409:SF0">
    <property type="entry name" value="PREFOLDIN SUBUNIT 3"/>
    <property type="match status" value="1"/>
</dbReference>
<dbReference type="Pfam" id="PF02996">
    <property type="entry name" value="Prefoldin"/>
    <property type="match status" value="1"/>
</dbReference>
<dbReference type="PIRSF" id="PIRSF016396">
    <property type="entry name" value="Prefoldin_subunit_3"/>
    <property type="match status" value="1"/>
</dbReference>
<dbReference type="SUPFAM" id="SSF46579">
    <property type="entry name" value="Prefoldin"/>
    <property type="match status" value="1"/>
</dbReference>
<feature type="initiator methionine" description="Removed" evidence="2">
    <location>
        <position position="1"/>
    </location>
</feature>
<feature type="chain" id="PRO_0000282856" description="Prefoldin subunit 3">
    <location>
        <begin position="2"/>
        <end position="197"/>
    </location>
</feature>
<feature type="modified residue" description="N-acetylalanine" evidence="2">
    <location>
        <position position="2"/>
    </location>
</feature>
<feature type="modified residue" description="N6-acetyllysine" evidence="2">
    <location>
        <position position="59"/>
    </location>
</feature>
<organism>
    <name type="scientific">Bos taurus</name>
    <name type="common">Bovine</name>
    <dbReference type="NCBI Taxonomy" id="9913"/>
    <lineage>
        <taxon>Eukaryota</taxon>
        <taxon>Metazoa</taxon>
        <taxon>Chordata</taxon>
        <taxon>Craniata</taxon>
        <taxon>Vertebrata</taxon>
        <taxon>Euteleostomi</taxon>
        <taxon>Mammalia</taxon>
        <taxon>Eutheria</taxon>
        <taxon>Laurasiatheria</taxon>
        <taxon>Artiodactyla</taxon>
        <taxon>Ruminantia</taxon>
        <taxon>Pecora</taxon>
        <taxon>Bovidae</taxon>
        <taxon>Bovinae</taxon>
        <taxon>Bos</taxon>
    </lineage>
</organism>